<organism>
    <name type="scientific">Zea mays</name>
    <name type="common">Maize</name>
    <dbReference type="NCBI Taxonomy" id="4577"/>
    <lineage>
        <taxon>Eukaryota</taxon>
        <taxon>Viridiplantae</taxon>
        <taxon>Streptophyta</taxon>
        <taxon>Embryophyta</taxon>
        <taxon>Tracheophyta</taxon>
        <taxon>Spermatophyta</taxon>
        <taxon>Magnoliopsida</taxon>
        <taxon>Liliopsida</taxon>
        <taxon>Poales</taxon>
        <taxon>Poaceae</taxon>
        <taxon>PACMAD clade</taxon>
        <taxon>Panicoideae</taxon>
        <taxon>Andropogonodae</taxon>
        <taxon>Andropogoneae</taxon>
        <taxon>Tripsacinae</taxon>
        <taxon>Zea</taxon>
    </lineage>
</organism>
<comment type="function">
    <text evidence="2">Catalyzes the conversion of geranylgeranyl diphosphate to phytoene. Mediates the first committed step in carotenoid biosynthesis. May play a role in regulating carotenoid flux in response to abiotic stress in roots. May control flux to carotenoid precursors that are required for abiotic stress-induced abscisic acid (ABA) formation in roots.</text>
</comment>
<comment type="catalytic activity">
    <reaction evidence="2">
        <text>2 (2E,6E,10E)-geranylgeranyl diphosphate = 15-cis-phytoene + 2 diphosphate</text>
        <dbReference type="Rhea" id="RHEA:34475"/>
        <dbReference type="ChEBI" id="CHEBI:27787"/>
        <dbReference type="ChEBI" id="CHEBI:33019"/>
        <dbReference type="ChEBI" id="CHEBI:58756"/>
        <dbReference type="EC" id="2.5.1.32"/>
    </reaction>
</comment>
<comment type="subcellular location">
    <subcellularLocation>
        <location evidence="3">Plastid</location>
        <location evidence="3">Chloroplast</location>
        <location evidence="3">Plastoglobule</location>
    </subcellularLocation>
</comment>
<comment type="tissue specificity">
    <text evidence="2">Expressed in roots and endosperm.</text>
</comment>
<comment type="induction">
    <text evidence="2">Induced by drought stress, salt stress and abscisic acid (ABA) in roots.</text>
</comment>
<comment type="similarity">
    <text evidence="5">Belongs to the phytoene/squalene synthase family.</text>
</comment>
<name>PSY3_MAIZE</name>
<feature type="transit peptide" description="Chloroplast" evidence="1">
    <location>
        <begin position="1"/>
        <end position="52"/>
    </location>
</feature>
<feature type="chain" id="PRO_0000444951" description="Phytoene synthase 3, chloroplastic">
    <location>
        <begin position="53"/>
        <end position="426"/>
    </location>
</feature>
<feature type="sequence conflict" description="In Ref. 1; ABC75827." evidence="5" ref="1">
    <original>G</original>
    <variation>V</variation>
    <location>
        <position position="59"/>
    </location>
</feature>
<feature type="sequence conflict" description="In Ref. 1; ABC75827." evidence="5" ref="1">
    <original>M</original>
    <variation>I</variation>
    <location>
        <position position="154"/>
    </location>
</feature>
<feature type="sequence conflict" description="In Ref. 2; ACG30201." evidence="5" ref="2">
    <original>M</original>
    <variation>V</variation>
    <location>
        <position position="229"/>
    </location>
</feature>
<feature type="sequence conflict" description="In Ref. 2; ACG30201." evidence="5" ref="2">
    <original>D</original>
    <variation>Y</variation>
    <location>
        <position position="382"/>
    </location>
</feature>
<evidence type="ECO:0000255" key="1"/>
<evidence type="ECO:0000269" key="2">
    <source>
    </source>
</evidence>
<evidence type="ECO:0000269" key="3">
    <source>
    </source>
</evidence>
<evidence type="ECO:0000303" key="4">
    <source>
    </source>
</evidence>
<evidence type="ECO:0000305" key="5"/>
<sequence>MMSTSRAVKSPACAARRRQWSADAPNRTATFLACRHGRRLGGGGGAPCSVRAEGSNTIGCLEAEAWGGAPALPGLRVAAPSPGDAFVVPSEQRVHEVVLRQAALAAAAPRTARIEPVPLDGGLKAAFHRCGEVCREYAKTFYLATQLMTPERRMAIWAIYVWCRRTDELVDGPNASHISALALDRWESRLEDIFAGRPYDMLDAALSDTVARFPVDIQPFRDMIEGMRMDLKKSRYRSFDELYLYCYYVAGTVGLMSVPVMGISPASRAATETVYKGALALGLANQLTNILRDVGEDARRGRIYLPQDELEMAGLSDADVLDGRVTDEWRGFMRGQIARARAFFRQAEEGATELNQESRWPVWSSLLLYRQILDEIEANDYDNFTRRAYVPKTKKLMALPKAYLRSLVVPSSSSQAESRRRYSTLT</sequence>
<reference key="1">
    <citation type="journal article" date="2008" name="Plant Physiol.">
        <title>PSY3, a new member of the phytoene synthase gene family conserved in the Poaceae and regulator of abiotic stress-induced root carotenogenesis.</title>
        <authorList>
            <person name="Li F."/>
            <person name="Vallabhaneni R."/>
            <person name="Wurtzel E.T."/>
        </authorList>
    </citation>
    <scope>NUCLEOTIDE SEQUENCE [GENOMIC DNA / MRNA]</scope>
    <scope>FUNCTION</scope>
    <scope>CATALYTIC ACTIVITY</scope>
    <scope>TISSUE SPECIFICITY</scope>
    <scope>INDUCTION</scope>
    <source>
        <strain>cv. B73</strain>
    </source>
</reference>
<reference key="2">
    <citation type="journal article" date="2009" name="Plant Mol. Biol.">
        <title>Insights into corn genes derived from large-scale cDNA sequencing.</title>
        <authorList>
            <person name="Alexandrov N.N."/>
            <person name="Brover V.V."/>
            <person name="Freidin S."/>
            <person name="Troukhan M.E."/>
            <person name="Tatarinova T.V."/>
            <person name="Zhang H."/>
            <person name="Swaller T.J."/>
            <person name="Lu Y.-P."/>
            <person name="Bouck J."/>
            <person name="Flavell R.B."/>
            <person name="Feldmann K.A."/>
        </authorList>
    </citation>
    <scope>NUCLEOTIDE SEQUENCE [LARGE SCALE MRNA]</scope>
</reference>
<reference key="3">
    <citation type="journal article" date="2012" name="Plant Cell">
        <title>Plastid localization of the key carotenoid enzyme phytoene synthase is altered by isozyme, allelic variation, and activity.</title>
        <authorList>
            <person name="Shumskaya M."/>
            <person name="Bradbury L.M."/>
            <person name="Monaco R.R."/>
            <person name="Wurtzel E.T."/>
        </authorList>
    </citation>
    <scope>SUBCELLULAR LOCATION</scope>
</reference>
<proteinExistence type="evidence at protein level"/>
<accession>B0KZ40</accession>
<accession>B0KYU8</accession>
<accession>B6SZB8</accession>
<protein>
    <recommendedName>
        <fullName evidence="4">Phytoene synthase 3, chloroplastic</fullName>
        <shortName evidence="4">ZmPSY3</shortName>
        <ecNumber evidence="2">2.5.1.32</ecNumber>
    </recommendedName>
</protein>
<gene>
    <name evidence="4" type="primary">PSY3</name>
</gene>
<dbReference type="EC" id="2.5.1.32" evidence="2"/>
<dbReference type="EMBL" id="DQ372936">
    <property type="protein sequence ID" value="ABD17618.1"/>
    <property type="molecule type" value="Genomic_DNA"/>
</dbReference>
<dbReference type="EMBL" id="DQ356430">
    <property type="protein sequence ID" value="ABC75827.1"/>
    <property type="molecule type" value="mRNA"/>
</dbReference>
<dbReference type="EMBL" id="EU958083">
    <property type="protein sequence ID" value="ACG30201.1"/>
    <property type="molecule type" value="mRNA"/>
</dbReference>
<dbReference type="SMR" id="B0KZ40"/>
<dbReference type="FunCoup" id="B0KZ40">
    <property type="interactions" value="31"/>
</dbReference>
<dbReference type="STRING" id="4577.B0KZ40"/>
<dbReference type="PaxDb" id="4577-GRMZM2G300238_P01"/>
<dbReference type="EnsemblPlants" id="Zm00001eb320650_T001">
    <property type="protein sequence ID" value="Zm00001eb320650_P001"/>
    <property type="gene ID" value="Zm00001eb320650"/>
</dbReference>
<dbReference type="Gramene" id="Zm00001eb320650_T001">
    <property type="protein sequence ID" value="Zm00001eb320650_P001"/>
    <property type="gene ID" value="Zm00001eb320650"/>
</dbReference>
<dbReference type="InParanoid" id="B0KZ40"/>
<dbReference type="OrthoDB" id="6600518at2759"/>
<dbReference type="Proteomes" id="UP000007305">
    <property type="component" value="Chromosome 7"/>
</dbReference>
<dbReference type="ExpressionAtlas" id="B0KZ40">
    <property type="expression patterns" value="baseline and differential"/>
</dbReference>
<dbReference type="GO" id="GO:0010287">
    <property type="term" value="C:plastoglobule"/>
    <property type="evidence" value="ECO:0000314"/>
    <property type="project" value="UniProtKB"/>
</dbReference>
<dbReference type="GO" id="GO:0046905">
    <property type="term" value="F:15-cis-phytoene synthase activity"/>
    <property type="evidence" value="ECO:0000314"/>
    <property type="project" value="UniProtKB"/>
</dbReference>
<dbReference type="GO" id="GO:0004311">
    <property type="term" value="F:geranylgeranyl diphosphate synthase activity"/>
    <property type="evidence" value="ECO:0007669"/>
    <property type="project" value="InterPro"/>
</dbReference>
<dbReference type="GO" id="GO:0051996">
    <property type="term" value="F:squalene synthase [NAD(P)H] activity"/>
    <property type="evidence" value="ECO:0007669"/>
    <property type="project" value="InterPro"/>
</dbReference>
<dbReference type="GO" id="GO:0016117">
    <property type="term" value="P:carotenoid biosynthetic process"/>
    <property type="evidence" value="ECO:0000314"/>
    <property type="project" value="UniProtKB"/>
</dbReference>
<dbReference type="CDD" id="cd00683">
    <property type="entry name" value="Trans_IPPS_HH"/>
    <property type="match status" value="1"/>
</dbReference>
<dbReference type="FunFam" id="1.10.600.10:FF:000004">
    <property type="entry name" value="Phytoene synthase chloroplastic"/>
    <property type="match status" value="1"/>
</dbReference>
<dbReference type="Gene3D" id="1.10.600.10">
    <property type="entry name" value="Farnesyl Diphosphate Synthase"/>
    <property type="match status" value="1"/>
</dbReference>
<dbReference type="InterPro" id="IPR008949">
    <property type="entry name" value="Isoprenoid_synthase_dom_sf"/>
</dbReference>
<dbReference type="InterPro" id="IPR002060">
    <property type="entry name" value="Squ/phyt_synthse"/>
</dbReference>
<dbReference type="InterPro" id="IPR019845">
    <property type="entry name" value="Squalene/phytoene_synthase_CS"/>
</dbReference>
<dbReference type="InterPro" id="IPR044843">
    <property type="entry name" value="Trans_IPPS_bact-type"/>
</dbReference>
<dbReference type="InterPro" id="IPR033904">
    <property type="entry name" value="Trans_IPPS_HH"/>
</dbReference>
<dbReference type="PANTHER" id="PTHR31480">
    <property type="entry name" value="BIFUNCTIONAL LYCOPENE CYCLASE/PHYTOENE SYNTHASE"/>
    <property type="match status" value="1"/>
</dbReference>
<dbReference type="Pfam" id="PF00494">
    <property type="entry name" value="SQS_PSY"/>
    <property type="match status" value="1"/>
</dbReference>
<dbReference type="SFLD" id="SFLDG01212">
    <property type="entry name" value="Phytoene_synthase_like"/>
    <property type="match status" value="1"/>
</dbReference>
<dbReference type="SFLD" id="SFLDG01018">
    <property type="entry name" value="Squalene/Phytoene_Synthase_Lik"/>
    <property type="match status" value="1"/>
</dbReference>
<dbReference type="SUPFAM" id="SSF48576">
    <property type="entry name" value="Terpenoid synthases"/>
    <property type="match status" value="1"/>
</dbReference>
<dbReference type="PROSITE" id="PS01044">
    <property type="entry name" value="SQUALEN_PHYTOEN_SYN_1"/>
    <property type="match status" value="1"/>
</dbReference>
<dbReference type="PROSITE" id="PS01045">
    <property type="entry name" value="SQUALEN_PHYTOEN_SYN_2"/>
    <property type="match status" value="1"/>
</dbReference>
<keyword id="KW-0125">Carotenoid biosynthesis</keyword>
<keyword id="KW-0150">Chloroplast</keyword>
<keyword id="KW-0414">Isoprene biosynthesis</keyword>
<keyword id="KW-0934">Plastid</keyword>
<keyword id="KW-1185">Reference proteome</keyword>
<keyword id="KW-0808">Transferase</keyword>
<keyword id="KW-0809">Transit peptide</keyword>